<comment type="function">
    <text evidence="1">Could be a mediator in iron transactions between iron acquisition and iron-requiring processes, such as synthesis and/or repair of Fe-S clusters in biosynthetic enzymes.</text>
</comment>
<comment type="similarity">
    <text evidence="1">Belongs to the Fe(2+)-trafficking protein family.</text>
</comment>
<evidence type="ECO:0000255" key="1">
    <source>
        <dbReference type="HAMAP-Rule" id="MF_00686"/>
    </source>
</evidence>
<dbReference type="EMBL" id="CP000285">
    <property type="protein sequence ID" value="ABE57885.1"/>
    <property type="molecule type" value="Genomic_DNA"/>
</dbReference>
<dbReference type="RefSeq" id="WP_011505831.1">
    <property type="nucleotide sequence ID" value="NC_007963.1"/>
</dbReference>
<dbReference type="SMR" id="Q1R073"/>
<dbReference type="STRING" id="290398.Csal_0523"/>
<dbReference type="GeneID" id="95333277"/>
<dbReference type="KEGG" id="csa:Csal_0523"/>
<dbReference type="eggNOG" id="COG2924">
    <property type="taxonomic scope" value="Bacteria"/>
</dbReference>
<dbReference type="HOGENOM" id="CLU_170994_0_0_6"/>
<dbReference type="OrthoDB" id="9804318at2"/>
<dbReference type="Proteomes" id="UP000000239">
    <property type="component" value="Chromosome"/>
</dbReference>
<dbReference type="GO" id="GO:0005829">
    <property type="term" value="C:cytosol"/>
    <property type="evidence" value="ECO:0007669"/>
    <property type="project" value="TreeGrafter"/>
</dbReference>
<dbReference type="GO" id="GO:0005506">
    <property type="term" value="F:iron ion binding"/>
    <property type="evidence" value="ECO:0007669"/>
    <property type="project" value="UniProtKB-UniRule"/>
</dbReference>
<dbReference type="GO" id="GO:0034599">
    <property type="term" value="P:cellular response to oxidative stress"/>
    <property type="evidence" value="ECO:0007669"/>
    <property type="project" value="TreeGrafter"/>
</dbReference>
<dbReference type="Gene3D" id="1.10.3880.10">
    <property type="entry name" value="Fe(II) trafficking protein YggX"/>
    <property type="match status" value="1"/>
</dbReference>
<dbReference type="HAMAP" id="MF_00686">
    <property type="entry name" value="Fe_traffic_YggX"/>
    <property type="match status" value="1"/>
</dbReference>
<dbReference type="InterPro" id="IPR007457">
    <property type="entry name" value="Fe_traffick_prot_YggX"/>
</dbReference>
<dbReference type="InterPro" id="IPR036766">
    <property type="entry name" value="Fe_traffick_prot_YggX_sf"/>
</dbReference>
<dbReference type="NCBIfam" id="NF003817">
    <property type="entry name" value="PRK05408.1"/>
    <property type="match status" value="1"/>
</dbReference>
<dbReference type="PANTHER" id="PTHR36965">
    <property type="entry name" value="FE(2+)-TRAFFICKING PROTEIN-RELATED"/>
    <property type="match status" value="1"/>
</dbReference>
<dbReference type="PANTHER" id="PTHR36965:SF1">
    <property type="entry name" value="FE(2+)-TRAFFICKING PROTEIN-RELATED"/>
    <property type="match status" value="1"/>
</dbReference>
<dbReference type="Pfam" id="PF04362">
    <property type="entry name" value="Iron_traffic"/>
    <property type="match status" value="1"/>
</dbReference>
<dbReference type="PIRSF" id="PIRSF029827">
    <property type="entry name" value="Fe_traffic_YggX"/>
    <property type="match status" value="1"/>
</dbReference>
<dbReference type="SUPFAM" id="SSF111148">
    <property type="entry name" value="YggX-like"/>
    <property type="match status" value="1"/>
</dbReference>
<sequence>MSDTVFCRKYQKELDALPFPPLPGAKGQEIQQTVSKQAWDEWQALQTRLINEKHLSLLDPDARAYLMEQMERFLDNRETDQAEGYVPPSQ</sequence>
<protein>
    <recommendedName>
        <fullName evidence="1">Probable Fe(2+)-trafficking protein</fullName>
    </recommendedName>
</protein>
<reference key="1">
    <citation type="journal article" date="2011" name="Stand. Genomic Sci.">
        <title>Complete genome sequence of the halophilic and highly halotolerant Chromohalobacter salexigens type strain (1H11(T)).</title>
        <authorList>
            <person name="Copeland A."/>
            <person name="O'Connor K."/>
            <person name="Lucas S."/>
            <person name="Lapidus A."/>
            <person name="Berry K.W."/>
            <person name="Detter J.C."/>
            <person name="Del Rio T.G."/>
            <person name="Hammon N."/>
            <person name="Dalin E."/>
            <person name="Tice H."/>
            <person name="Pitluck S."/>
            <person name="Bruce D."/>
            <person name="Goodwin L."/>
            <person name="Han C."/>
            <person name="Tapia R."/>
            <person name="Saunders E."/>
            <person name="Schmutz J."/>
            <person name="Brettin T."/>
            <person name="Larimer F."/>
            <person name="Land M."/>
            <person name="Hauser L."/>
            <person name="Vargas C."/>
            <person name="Nieto J.J."/>
            <person name="Kyrpides N.C."/>
            <person name="Ivanova N."/>
            <person name="Goker M."/>
            <person name="Klenk H.P."/>
            <person name="Csonka L.N."/>
            <person name="Woyke T."/>
        </authorList>
    </citation>
    <scope>NUCLEOTIDE SEQUENCE [LARGE SCALE GENOMIC DNA]</scope>
    <source>
        <strain>ATCC BAA-138 / DSM 3043 / CIP 106854 / NCIMB 13768 / 1H11</strain>
    </source>
</reference>
<organism>
    <name type="scientific">Chromohalobacter salexigens (strain ATCC BAA-138 / DSM 3043 / CIP 106854 / NCIMB 13768 / 1H11)</name>
    <dbReference type="NCBI Taxonomy" id="290398"/>
    <lineage>
        <taxon>Bacteria</taxon>
        <taxon>Pseudomonadati</taxon>
        <taxon>Pseudomonadota</taxon>
        <taxon>Gammaproteobacteria</taxon>
        <taxon>Oceanospirillales</taxon>
        <taxon>Halomonadaceae</taxon>
        <taxon>Chromohalobacter</taxon>
    </lineage>
</organism>
<accession>Q1R073</accession>
<gene>
    <name type="ordered locus">Csal_0523</name>
</gene>
<name>FETP_CHRSD</name>
<keyword id="KW-0408">Iron</keyword>
<keyword id="KW-1185">Reference proteome</keyword>
<feature type="chain" id="PRO_1000045029" description="Probable Fe(2+)-trafficking protein">
    <location>
        <begin position="1"/>
        <end position="90"/>
    </location>
</feature>
<proteinExistence type="inferred from homology"/>